<gene>
    <name evidence="1" type="primary">glgB</name>
    <name type="ordered locus">BCE_5028</name>
</gene>
<comment type="function">
    <text evidence="1">Catalyzes the formation of the alpha-1,6-glucosidic linkages in glycogen by scission of a 1,4-alpha-linked oligosaccharide from growing alpha-1,4-glucan chains and the subsequent attachment of the oligosaccharide to the alpha-1,6 position.</text>
</comment>
<comment type="catalytic activity">
    <reaction evidence="1">
        <text>Transfers a segment of a (1-&gt;4)-alpha-D-glucan chain to a primary hydroxy group in a similar glucan chain.</text>
        <dbReference type="EC" id="2.4.1.18"/>
    </reaction>
</comment>
<comment type="pathway">
    <text evidence="1">Glycan biosynthesis; glycogen biosynthesis.</text>
</comment>
<comment type="subunit">
    <text evidence="1">Monomer.</text>
</comment>
<comment type="similarity">
    <text evidence="1">Belongs to the glycosyl hydrolase 13 family. GlgB subfamily.</text>
</comment>
<sequence length="645" mass="75943">MNVINCEEVKRDEFHTEKYYESYNIFGAHIVTEDEMRGVRFTVWAPHAKAMSVVGDFNEWDYEQHKMLQVTEEGIWSLFIPHIEEKEIYKYAIETMAGDVIFKADPYAVYAEVRPNTASVVFDIKGYEWNDKNWSRKKKKKSVYKEAMTVYELHFGSWKKKEDGTLYSYREMAEELIPYVVEHQFTHIEIMPLVEHPYDRSWGYQGTGYYAATSRFGTPHDLMHFVDECHKYGIGVILDWVPGHFCKDAHGLYLFDGTPTYEYKDKDVQENPVWGTVNFDLGKREVRNFLISNALFWMRYFHIDGFRVDAVANMLYWNKEGQEQSNEHAVSFLRELNEAVFAEDEDFLMTAEDSTAWPLVTAPTYEGGLGFNYKWNMGWMNDVLKYMECAPEYRKYIHEKMTFSLLYAYSENFILPLSHDEVVHGKKSLLNKMPGDYWDKFAQLRLLYGYFFTHPGKKLLFMGGEFGQFDEWKDLEDLDWNLHDFEMHRYMHDYFKELIALYKRSKPLWQLDHSPEGFQWIDANNNEQSIFSFIRQGDKQEDALVVVCNFTKATYENYKVGVPDFEYYNEVLNSDAEQYGGSGQVNKKRLKAIQEPFHNQAAHVEITIPPFGVSILRPVKTRKGSKKQDGSKTKVRSNVTSRGKR</sequence>
<feature type="chain" id="PRO_0000188676" description="1,4-alpha-glucan branching enzyme GlgB">
    <location>
        <begin position="1"/>
        <end position="645"/>
    </location>
</feature>
<feature type="region of interest" description="Disordered" evidence="2">
    <location>
        <begin position="619"/>
        <end position="645"/>
    </location>
</feature>
<feature type="compositionally biased region" description="Polar residues" evidence="2">
    <location>
        <begin position="636"/>
        <end position="645"/>
    </location>
</feature>
<feature type="active site" description="Nucleophile" evidence="1">
    <location>
        <position position="309"/>
    </location>
</feature>
<feature type="active site" description="Proton donor" evidence="1">
    <location>
        <position position="352"/>
    </location>
</feature>
<organism>
    <name type="scientific">Bacillus cereus (strain ATCC 10987 / NRS 248)</name>
    <dbReference type="NCBI Taxonomy" id="222523"/>
    <lineage>
        <taxon>Bacteria</taxon>
        <taxon>Bacillati</taxon>
        <taxon>Bacillota</taxon>
        <taxon>Bacilli</taxon>
        <taxon>Bacillales</taxon>
        <taxon>Bacillaceae</taxon>
        <taxon>Bacillus</taxon>
        <taxon>Bacillus cereus group</taxon>
    </lineage>
</organism>
<name>GLGB_BACC1</name>
<evidence type="ECO:0000255" key="1">
    <source>
        <dbReference type="HAMAP-Rule" id="MF_00685"/>
    </source>
</evidence>
<evidence type="ECO:0000256" key="2">
    <source>
        <dbReference type="SAM" id="MobiDB-lite"/>
    </source>
</evidence>
<accession>Q72YJ3</accession>
<keyword id="KW-0119">Carbohydrate metabolism</keyword>
<keyword id="KW-0320">Glycogen biosynthesis</keyword>
<keyword id="KW-0321">Glycogen metabolism</keyword>
<keyword id="KW-0328">Glycosyltransferase</keyword>
<keyword id="KW-0808">Transferase</keyword>
<protein>
    <recommendedName>
        <fullName evidence="1">1,4-alpha-glucan branching enzyme GlgB</fullName>
        <ecNumber evidence="1">2.4.1.18</ecNumber>
    </recommendedName>
    <alternativeName>
        <fullName evidence="1">1,4-alpha-D-glucan:1,4-alpha-D-glucan 6-glucosyl-transferase</fullName>
    </alternativeName>
    <alternativeName>
        <fullName evidence="1">Alpha-(1-&gt;4)-glucan branching enzyme</fullName>
    </alternativeName>
    <alternativeName>
        <fullName evidence="1">Glycogen branching enzyme</fullName>
        <shortName evidence="1">BE</shortName>
    </alternativeName>
</protein>
<proteinExistence type="inferred from homology"/>
<dbReference type="EC" id="2.4.1.18" evidence="1"/>
<dbReference type="EMBL" id="AE017194">
    <property type="protein sequence ID" value="AAS43929.1"/>
    <property type="molecule type" value="Genomic_DNA"/>
</dbReference>
<dbReference type="SMR" id="Q72YJ3"/>
<dbReference type="CAZy" id="CBM48">
    <property type="family name" value="Carbohydrate-Binding Module Family 48"/>
</dbReference>
<dbReference type="CAZy" id="GH13">
    <property type="family name" value="Glycoside Hydrolase Family 13"/>
</dbReference>
<dbReference type="KEGG" id="bca:BCE_5028"/>
<dbReference type="HOGENOM" id="CLU_004245_4_0_9"/>
<dbReference type="UniPathway" id="UPA00164"/>
<dbReference type="Proteomes" id="UP000002527">
    <property type="component" value="Chromosome"/>
</dbReference>
<dbReference type="GO" id="GO:0005829">
    <property type="term" value="C:cytosol"/>
    <property type="evidence" value="ECO:0007669"/>
    <property type="project" value="TreeGrafter"/>
</dbReference>
<dbReference type="GO" id="GO:0003844">
    <property type="term" value="F:1,4-alpha-glucan branching enzyme activity"/>
    <property type="evidence" value="ECO:0007669"/>
    <property type="project" value="UniProtKB-UniRule"/>
</dbReference>
<dbReference type="GO" id="GO:0043169">
    <property type="term" value="F:cation binding"/>
    <property type="evidence" value="ECO:0007669"/>
    <property type="project" value="InterPro"/>
</dbReference>
<dbReference type="GO" id="GO:0004553">
    <property type="term" value="F:hydrolase activity, hydrolyzing O-glycosyl compounds"/>
    <property type="evidence" value="ECO:0007669"/>
    <property type="project" value="InterPro"/>
</dbReference>
<dbReference type="GO" id="GO:0005978">
    <property type="term" value="P:glycogen biosynthetic process"/>
    <property type="evidence" value="ECO:0007669"/>
    <property type="project" value="UniProtKB-UniRule"/>
</dbReference>
<dbReference type="CDD" id="cd11322">
    <property type="entry name" value="AmyAc_Glg_BE"/>
    <property type="match status" value="1"/>
</dbReference>
<dbReference type="CDD" id="cd02855">
    <property type="entry name" value="E_set_GBE_prok_N"/>
    <property type="match status" value="1"/>
</dbReference>
<dbReference type="FunFam" id="2.60.40.10:FF:000169">
    <property type="entry name" value="1,4-alpha-glucan branching enzyme GlgB"/>
    <property type="match status" value="1"/>
</dbReference>
<dbReference type="FunFam" id="2.60.40.1180:FF:000002">
    <property type="entry name" value="1,4-alpha-glucan branching enzyme GlgB"/>
    <property type="match status" value="1"/>
</dbReference>
<dbReference type="FunFam" id="3.20.20.80:FF:000003">
    <property type="entry name" value="1,4-alpha-glucan branching enzyme GlgB"/>
    <property type="match status" value="1"/>
</dbReference>
<dbReference type="Gene3D" id="3.20.20.80">
    <property type="entry name" value="Glycosidases"/>
    <property type="match status" value="1"/>
</dbReference>
<dbReference type="Gene3D" id="2.60.40.1180">
    <property type="entry name" value="Golgi alpha-mannosidase II"/>
    <property type="match status" value="1"/>
</dbReference>
<dbReference type="Gene3D" id="2.60.40.10">
    <property type="entry name" value="Immunoglobulins"/>
    <property type="match status" value="1"/>
</dbReference>
<dbReference type="HAMAP" id="MF_00685">
    <property type="entry name" value="GlgB"/>
    <property type="match status" value="1"/>
</dbReference>
<dbReference type="InterPro" id="IPR006048">
    <property type="entry name" value="A-amylase/branching_C"/>
</dbReference>
<dbReference type="InterPro" id="IPR037439">
    <property type="entry name" value="Branching_enzy"/>
</dbReference>
<dbReference type="InterPro" id="IPR006407">
    <property type="entry name" value="GlgB"/>
</dbReference>
<dbReference type="InterPro" id="IPR044143">
    <property type="entry name" value="GlgB_N_E_set_prok"/>
</dbReference>
<dbReference type="InterPro" id="IPR006047">
    <property type="entry name" value="Glyco_hydro_13_cat_dom"/>
</dbReference>
<dbReference type="InterPro" id="IPR004193">
    <property type="entry name" value="Glyco_hydro_13_N"/>
</dbReference>
<dbReference type="InterPro" id="IPR013780">
    <property type="entry name" value="Glyco_hydro_b"/>
</dbReference>
<dbReference type="InterPro" id="IPR017853">
    <property type="entry name" value="Glycoside_hydrolase_SF"/>
</dbReference>
<dbReference type="InterPro" id="IPR013783">
    <property type="entry name" value="Ig-like_fold"/>
</dbReference>
<dbReference type="NCBIfam" id="TIGR01515">
    <property type="entry name" value="branching_enzym"/>
    <property type="match status" value="1"/>
</dbReference>
<dbReference type="NCBIfam" id="NF003811">
    <property type="entry name" value="PRK05402.1"/>
    <property type="match status" value="1"/>
</dbReference>
<dbReference type="NCBIfam" id="NF008967">
    <property type="entry name" value="PRK12313.1"/>
    <property type="match status" value="1"/>
</dbReference>
<dbReference type="PANTHER" id="PTHR43651">
    <property type="entry name" value="1,4-ALPHA-GLUCAN-BRANCHING ENZYME"/>
    <property type="match status" value="1"/>
</dbReference>
<dbReference type="PANTHER" id="PTHR43651:SF3">
    <property type="entry name" value="1,4-ALPHA-GLUCAN-BRANCHING ENZYME"/>
    <property type="match status" value="1"/>
</dbReference>
<dbReference type="Pfam" id="PF00128">
    <property type="entry name" value="Alpha-amylase"/>
    <property type="match status" value="2"/>
</dbReference>
<dbReference type="Pfam" id="PF02806">
    <property type="entry name" value="Alpha-amylase_C"/>
    <property type="match status" value="1"/>
</dbReference>
<dbReference type="Pfam" id="PF02922">
    <property type="entry name" value="CBM_48"/>
    <property type="match status" value="1"/>
</dbReference>
<dbReference type="PIRSF" id="PIRSF000463">
    <property type="entry name" value="GlgB"/>
    <property type="match status" value="1"/>
</dbReference>
<dbReference type="SMART" id="SM00642">
    <property type="entry name" value="Aamy"/>
    <property type="match status" value="1"/>
</dbReference>
<dbReference type="SUPFAM" id="SSF51445">
    <property type="entry name" value="(Trans)glycosidases"/>
    <property type="match status" value="1"/>
</dbReference>
<dbReference type="SUPFAM" id="SSF51011">
    <property type="entry name" value="Glycosyl hydrolase domain"/>
    <property type="match status" value="1"/>
</dbReference>
<reference key="1">
    <citation type="journal article" date="2004" name="Nucleic Acids Res.">
        <title>The genome sequence of Bacillus cereus ATCC 10987 reveals metabolic adaptations and a large plasmid related to Bacillus anthracis pXO1.</title>
        <authorList>
            <person name="Rasko D.A."/>
            <person name="Ravel J."/>
            <person name="Oekstad O.A."/>
            <person name="Helgason E."/>
            <person name="Cer R.Z."/>
            <person name="Jiang L."/>
            <person name="Shores K.A."/>
            <person name="Fouts D.E."/>
            <person name="Tourasse N.J."/>
            <person name="Angiuoli S.V."/>
            <person name="Kolonay J.F."/>
            <person name="Nelson W.C."/>
            <person name="Kolstoe A.-B."/>
            <person name="Fraser C.M."/>
            <person name="Read T.D."/>
        </authorList>
    </citation>
    <scope>NUCLEOTIDE SEQUENCE [LARGE SCALE GENOMIC DNA]</scope>
    <source>
        <strain>ATCC 10987 / NRS 248</strain>
    </source>
</reference>